<dbReference type="EMBL" id="U37518">
    <property type="protein sequence ID" value="AAC50332.1"/>
    <property type="molecule type" value="mRNA"/>
</dbReference>
<dbReference type="EMBL" id="U57059">
    <property type="protein sequence ID" value="AAB01233.1"/>
    <property type="molecule type" value="mRNA"/>
</dbReference>
<dbReference type="EMBL" id="DQ848564">
    <property type="protein sequence ID" value="ABI24016.1"/>
    <property type="molecule type" value="mRNA"/>
</dbReference>
<dbReference type="EMBL" id="EU183231">
    <property type="protein sequence ID" value="ABW24658.1"/>
    <property type="molecule type" value="mRNA"/>
</dbReference>
<dbReference type="EMBL" id="AK296085">
    <property type="protein sequence ID" value="BAG58840.1"/>
    <property type="molecule type" value="mRNA"/>
</dbReference>
<dbReference type="EMBL" id="AC007919">
    <property type="status" value="NOT_ANNOTATED_CDS"/>
    <property type="molecule type" value="Genomic_DNA"/>
</dbReference>
<dbReference type="EMBL" id="AC016938">
    <property type="status" value="NOT_ANNOTATED_CDS"/>
    <property type="molecule type" value="Genomic_DNA"/>
</dbReference>
<dbReference type="EMBL" id="BC032722">
    <property type="protein sequence ID" value="AAH32722.1"/>
    <property type="molecule type" value="mRNA"/>
</dbReference>
<dbReference type="CCDS" id="CCDS3219.1">
    <molecule id="P50591-1"/>
</dbReference>
<dbReference type="CCDS" id="CCDS54680.1">
    <molecule id="P50591-2"/>
</dbReference>
<dbReference type="RefSeq" id="NP_001177871.1">
    <molecule id="P50591-2"/>
    <property type="nucleotide sequence ID" value="NM_001190942.2"/>
</dbReference>
<dbReference type="RefSeq" id="NP_003801.1">
    <molecule id="P50591-1"/>
    <property type="nucleotide sequence ID" value="NM_003810.4"/>
</dbReference>
<dbReference type="PDB" id="1D0G">
    <property type="method" value="X-ray"/>
    <property type="resolution" value="2.40 A"/>
    <property type="chains" value="A/B/D=114-281"/>
</dbReference>
<dbReference type="PDB" id="1D2Q">
    <property type="method" value="X-ray"/>
    <property type="resolution" value="2.80 A"/>
    <property type="chains" value="A/B=114-281"/>
</dbReference>
<dbReference type="PDB" id="1D4V">
    <property type="method" value="X-ray"/>
    <property type="resolution" value="2.20 A"/>
    <property type="chains" value="B=119-281"/>
</dbReference>
<dbReference type="PDB" id="1DG6">
    <property type="method" value="X-ray"/>
    <property type="resolution" value="1.30 A"/>
    <property type="chains" value="A=91-281"/>
</dbReference>
<dbReference type="PDB" id="1DU3">
    <property type="method" value="X-ray"/>
    <property type="resolution" value="2.20 A"/>
    <property type="chains" value="D/E/F/J/K/L=114-281"/>
</dbReference>
<dbReference type="PDB" id="4N90">
    <property type="method" value="X-ray"/>
    <property type="resolution" value="3.30 A"/>
    <property type="chains" value="A/B/C=114-281"/>
</dbReference>
<dbReference type="PDB" id="5CIR">
    <property type="method" value="X-ray"/>
    <property type="resolution" value="3.00 A"/>
    <property type="chains" value="A/B/D=114-281"/>
</dbReference>
<dbReference type="PDBsum" id="1D0G"/>
<dbReference type="PDBsum" id="1D2Q"/>
<dbReference type="PDBsum" id="1D4V"/>
<dbReference type="PDBsum" id="1DG6"/>
<dbReference type="PDBsum" id="1DU3"/>
<dbReference type="PDBsum" id="4N90"/>
<dbReference type="PDBsum" id="5CIR"/>
<dbReference type="SMR" id="P50591"/>
<dbReference type="BioGRID" id="114280">
    <property type="interactions" value="93"/>
</dbReference>
<dbReference type="CORUM" id="P50591"/>
<dbReference type="DIP" id="DIP-6230N"/>
<dbReference type="FunCoup" id="P50591">
    <property type="interactions" value="751"/>
</dbReference>
<dbReference type="IntAct" id="P50591">
    <property type="interactions" value="23"/>
</dbReference>
<dbReference type="MINT" id="P50591"/>
<dbReference type="STRING" id="9606.ENSP00000241261"/>
<dbReference type="BindingDB" id="P50591"/>
<dbReference type="ChEMBL" id="CHEMBL5813"/>
<dbReference type="DrugBank" id="DB04743">
    <property type="generic name" value="Nimesulide"/>
</dbReference>
<dbReference type="TCDB" id="8.A.177.1.9">
    <property type="family name" value="the tumor necrosis factor ligand member 6 (tnfl6) family"/>
</dbReference>
<dbReference type="GlyGen" id="P50591">
    <property type="glycosylation" value="1 site"/>
</dbReference>
<dbReference type="iPTMnet" id="P50591"/>
<dbReference type="PhosphoSitePlus" id="P50591"/>
<dbReference type="BioMuta" id="TNFSF10"/>
<dbReference type="DMDM" id="1730015"/>
<dbReference type="jPOST" id="P50591"/>
<dbReference type="MassIVE" id="P50591"/>
<dbReference type="PaxDb" id="9606-ENSP00000241261"/>
<dbReference type="PeptideAtlas" id="P50591"/>
<dbReference type="ProteomicsDB" id="56254">
    <molecule id="P50591-1"/>
</dbReference>
<dbReference type="Antibodypedia" id="3728">
    <property type="antibodies" value="1344 antibodies from 50 providers"/>
</dbReference>
<dbReference type="DNASU" id="8743"/>
<dbReference type="Ensembl" id="ENST00000241261.7">
    <molecule id="P50591-1"/>
    <property type="protein sequence ID" value="ENSP00000241261.2"/>
    <property type="gene ID" value="ENSG00000121858.11"/>
</dbReference>
<dbReference type="Ensembl" id="ENST00000420541.6">
    <molecule id="P50591-2"/>
    <property type="protein sequence ID" value="ENSP00000389931.2"/>
    <property type="gene ID" value="ENSG00000121858.11"/>
</dbReference>
<dbReference type="GeneID" id="8743"/>
<dbReference type="KEGG" id="hsa:8743"/>
<dbReference type="MANE-Select" id="ENST00000241261.7">
    <property type="protein sequence ID" value="ENSP00000241261.2"/>
    <property type="RefSeq nucleotide sequence ID" value="NM_003810.4"/>
    <property type="RefSeq protein sequence ID" value="NP_003801.1"/>
</dbReference>
<dbReference type="UCSC" id="uc003fie.4">
    <molecule id="P50591-1"/>
    <property type="organism name" value="human"/>
</dbReference>
<dbReference type="AGR" id="HGNC:11925"/>
<dbReference type="CTD" id="8743"/>
<dbReference type="DisGeNET" id="8743"/>
<dbReference type="GeneCards" id="TNFSF10"/>
<dbReference type="HGNC" id="HGNC:11925">
    <property type="gene designation" value="TNFSF10"/>
</dbReference>
<dbReference type="HPA" id="ENSG00000121858">
    <property type="expression patterns" value="Low tissue specificity"/>
</dbReference>
<dbReference type="MIM" id="603598">
    <property type="type" value="gene"/>
</dbReference>
<dbReference type="neXtProt" id="NX_P50591"/>
<dbReference type="OpenTargets" id="ENSG00000121858"/>
<dbReference type="PharmGKB" id="PA36618"/>
<dbReference type="VEuPathDB" id="HostDB:ENSG00000121858"/>
<dbReference type="eggNOG" id="ENOG502QQ3R">
    <property type="taxonomic scope" value="Eukaryota"/>
</dbReference>
<dbReference type="GeneTree" id="ENSGT01130000278318"/>
<dbReference type="HOGENOM" id="CLU_070352_1_0_1"/>
<dbReference type="InParanoid" id="P50591"/>
<dbReference type="OMA" id="NGDIVDM"/>
<dbReference type="OrthoDB" id="9446605at2759"/>
<dbReference type="PAN-GO" id="P50591">
    <property type="GO annotations" value="2 GO annotations based on evolutionary models"/>
</dbReference>
<dbReference type="PhylomeDB" id="P50591"/>
<dbReference type="TreeFam" id="TF332169"/>
<dbReference type="PathwayCommons" id="P50591"/>
<dbReference type="Reactome" id="R-HSA-140534">
    <property type="pathway name" value="Caspase activation via Death Receptors in the presence of ligand"/>
</dbReference>
<dbReference type="Reactome" id="R-HSA-3371378">
    <property type="pathway name" value="Regulation by c-FLIP"/>
</dbReference>
<dbReference type="Reactome" id="R-HSA-5213460">
    <property type="pathway name" value="RIPK1-mediated regulated necrosis"/>
</dbReference>
<dbReference type="Reactome" id="R-HSA-5218900">
    <property type="pathway name" value="CASP8 activity is inhibited"/>
</dbReference>
<dbReference type="Reactome" id="R-HSA-69416">
    <property type="pathway name" value="Dimerization of procaspase-8"/>
</dbReference>
<dbReference type="Reactome" id="R-HSA-75158">
    <property type="pathway name" value="TRAIL signaling"/>
</dbReference>
<dbReference type="SignaLink" id="P50591"/>
<dbReference type="SIGNOR" id="P50591"/>
<dbReference type="BioGRID-ORCS" id="8743">
    <property type="hits" value="23 hits in 1150 CRISPR screens"/>
</dbReference>
<dbReference type="ChiTaRS" id="TNFSF10">
    <property type="organism name" value="human"/>
</dbReference>
<dbReference type="EvolutionaryTrace" id="P50591"/>
<dbReference type="GeneWiki" id="TRAIL"/>
<dbReference type="GenomeRNAi" id="8743"/>
<dbReference type="Pharos" id="P50591">
    <property type="development level" value="Tchem"/>
</dbReference>
<dbReference type="PRO" id="PR:P50591"/>
<dbReference type="Proteomes" id="UP000005640">
    <property type="component" value="Chromosome 3"/>
</dbReference>
<dbReference type="RNAct" id="P50591">
    <property type="molecule type" value="protein"/>
</dbReference>
<dbReference type="Bgee" id="ENSG00000121858">
    <property type="expression patterns" value="Expressed in nasal cavity epithelium and 199 other cell types or tissues"/>
</dbReference>
<dbReference type="ExpressionAtlas" id="P50591">
    <property type="expression patterns" value="baseline and differential"/>
</dbReference>
<dbReference type="GO" id="GO:0070062">
    <property type="term" value="C:extracellular exosome"/>
    <property type="evidence" value="ECO:0007005"/>
    <property type="project" value="UniProtKB"/>
</dbReference>
<dbReference type="GO" id="GO:0005576">
    <property type="term" value="C:extracellular region"/>
    <property type="evidence" value="ECO:0000304"/>
    <property type="project" value="Reactome"/>
</dbReference>
<dbReference type="GO" id="GO:0005615">
    <property type="term" value="C:extracellular space"/>
    <property type="evidence" value="ECO:0000314"/>
    <property type="project" value="UniProt"/>
</dbReference>
<dbReference type="GO" id="GO:0005886">
    <property type="term" value="C:plasma membrane"/>
    <property type="evidence" value="ECO:0000304"/>
    <property type="project" value="ProtInc"/>
</dbReference>
<dbReference type="GO" id="GO:0005125">
    <property type="term" value="F:cytokine activity"/>
    <property type="evidence" value="ECO:0000314"/>
    <property type="project" value="UniProt"/>
</dbReference>
<dbReference type="GO" id="GO:0042802">
    <property type="term" value="F:identical protein binding"/>
    <property type="evidence" value="ECO:0000314"/>
    <property type="project" value="UniProtKB"/>
</dbReference>
<dbReference type="GO" id="GO:0005102">
    <property type="term" value="F:signaling receptor binding"/>
    <property type="evidence" value="ECO:0000304"/>
    <property type="project" value="ProtInc"/>
</dbReference>
<dbReference type="GO" id="GO:0045569">
    <property type="term" value="F:TRAIL binding"/>
    <property type="evidence" value="ECO:0007669"/>
    <property type="project" value="Ensembl"/>
</dbReference>
<dbReference type="GO" id="GO:0005164">
    <property type="term" value="F:tumor necrosis factor receptor binding"/>
    <property type="evidence" value="ECO:0007669"/>
    <property type="project" value="InterPro"/>
</dbReference>
<dbReference type="GO" id="GO:0008270">
    <property type="term" value="F:zinc ion binding"/>
    <property type="evidence" value="ECO:0000314"/>
    <property type="project" value="UniProtKB"/>
</dbReference>
<dbReference type="GO" id="GO:0006915">
    <property type="term" value="P:apoptotic process"/>
    <property type="evidence" value="ECO:0000304"/>
    <property type="project" value="ProtInc"/>
</dbReference>
<dbReference type="GO" id="GO:0007166">
    <property type="term" value="P:cell surface receptor signaling pathway"/>
    <property type="evidence" value="ECO:0000318"/>
    <property type="project" value="GO_Central"/>
</dbReference>
<dbReference type="GO" id="GO:0007267">
    <property type="term" value="P:cell-cell signaling"/>
    <property type="evidence" value="ECO:0000304"/>
    <property type="project" value="ProtInc"/>
</dbReference>
<dbReference type="GO" id="GO:0006955">
    <property type="term" value="P:immune response"/>
    <property type="evidence" value="ECO:0007669"/>
    <property type="project" value="InterPro"/>
</dbReference>
<dbReference type="GO" id="GO:0043065">
    <property type="term" value="P:positive regulation of apoptotic process"/>
    <property type="evidence" value="ECO:0000314"/>
    <property type="project" value="UniProtKB"/>
</dbReference>
<dbReference type="GO" id="GO:0043123">
    <property type="term" value="P:positive regulation of canonical NF-kappaB signal transduction"/>
    <property type="evidence" value="ECO:0000270"/>
    <property type="project" value="UniProtKB"/>
</dbReference>
<dbReference type="GO" id="GO:2001238">
    <property type="term" value="P:positive regulation of extrinsic apoptotic signaling pathway"/>
    <property type="evidence" value="ECO:0000314"/>
    <property type="project" value="UniProtKB"/>
</dbReference>
<dbReference type="GO" id="GO:0090200">
    <property type="term" value="P:positive regulation of release of cytochrome c from mitochondria"/>
    <property type="evidence" value="ECO:0000314"/>
    <property type="project" value="UniProtKB"/>
</dbReference>
<dbReference type="GO" id="GO:0007165">
    <property type="term" value="P:signal transduction"/>
    <property type="evidence" value="ECO:0000304"/>
    <property type="project" value="ProtInc"/>
</dbReference>
<dbReference type="GO" id="GO:0036462">
    <property type="term" value="P:TRAIL-activated apoptotic signaling pathway"/>
    <property type="evidence" value="ECO:0000314"/>
    <property type="project" value="UniProt"/>
</dbReference>
<dbReference type="CDD" id="cd00184">
    <property type="entry name" value="TNF"/>
    <property type="match status" value="1"/>
</dbReference>
<dbReference type="FunFam" id="2.60.120.40:FF:000014">
    <property type="entry name" value="Tumor necrosis factor ligand superfamily member"/>
    <property type="match status" value="1"/>
</dbReference>
<dbReference type="Gene3D" id="2.60.120.40">
    <property type="match status" value="1"/>
</dbReference>
<dbReference type="InterPro" id="IPR021184">
    <property type="entry name" value="TNF_CS"/>
</dbReference>
<dbReference type="InterPro" id="IPR006052">
    <property type="entry name" value="TNF_dom"/>
</dbReference>
<dbReference type="InterPro" id="IPR017355">
    <property type="entry name" value="TNF_ligand_10/11"/>
</dbReference>
<dbReference type="InterPro" id="IPR008983">
    <property type="entry name" value="Tumour_necrosis_fac-like_dom"/>
</dbReference>
<dbReference type="PANTHER" id="PTHR11471">
    <property type="entry name" value="TUMOR NECROSIS FACTOR FAMILY MEMBER"/>
    <property type="match status" value="1"/>
</dbReference>
<dbReference type="PANTHER" id="PTHR11471:SF27">
    <property type="entry name" value="TUMOR NECROSIS FACTOR LIGAND SUPERFAMILY MEMBER 10"/>
    <property type="match status" value="1"/>
</dbReference>
<dbReference type="Pfam" id="PF00229">
    <property type="entry name" value="TNF"/>
    <property type="match status" value="1"/>
</dbReference>
<dbReference type="PIRSF" id="PIRSF038013">
    <property type="entry name" value="TNF10_TNF11"/>
    <property type="match status" value="1"/>
</dbReference>
<dbReference type="SMART" id="SM00207">
    <property type="entry name" value="TNF"/>
    <property type="match status" value="1"/>
</dbReference>
<dbReference type="SUPFAM" id="SSF49842">
    <property type="entry name" value="TNF-like"/>
    <property type="match status" value="1"/>
</dbReference>
<dbReference type="PROSITE" id="PS00251">
    <property type="entry name" value="THD_1"/>
    <property type="match status" value="1"/>
</dbReference>
<dbReference type="PROSITE" id="PS50049">
    <property type="entry name" value="THD_2"/>
    <property type="match status" value="1"/>
</dbReference>
<gene>
    <name type="primary">TNFSF10</name>
    <name type="synonym">APO2L</name>
    <name type="synonym">TRAIL</name>
</gene>
<name>TNF10_HUMAN</name>
<proteinExistence type="evidence at protein level"/>
<reference key="1">
    <citation type="journal article" date="1995" name="Immunity">
        <title>Identification and characterization of a new member of the TNF family that induces apoptosis.</title>
        <authorList>
            <person name="Wiley S.R."/>
            <person name="Schooley K."/>
            <person name="Smolak P.J."/>
            <person name="Din W.S."/>
            <person name="Huang C.-P."/>
            <person name="Nicholl J.K."/>
            <person name="Sutherland G.R."/>
            <person name="Davis-Smith T."/>
            <person name="Rauch C."/>
            <person name="Smith C.A."/>
            <person name="Goodwin R.G."/>
        </authorList>
    </citation>
    <scope>NUCLEOTIDE SEQUENCE [MRNA] (ISOFORM 1)</scope>
</reference>
<reference key="2">
    <citation type="journal article" date="1996" name="J. Biol. Chem.">
        <title>Induction of apoptosis by Apo-2 ligand, a new member of the tumor necrosis factor cytokine family.</title>
        <authorList>
            <person name="Pitti R.M."/>
            <person name="Marsters S.A."/>
            <person name="Ruppert S."/>
            <person name="Donahue C.J."/>
            <person name="Moore A."/>
            <person name="Ashkenazi A."/>
        </authorList>
    </citation>
    <scope>NUCLEOTIDE SEQUENCE [MRNA] (ISOFORM 1)</scope>
    <source>
        <tissue>Placenta</tissue>
    </source>
</reference>
<reference key="3">
    <citation type="journal article" date="2011" name="J. Biol. Chem.">
        <title>Isolation of a TRAIL antagonist from the serum of HIV-infected patients.</title>
        <authorList>
            <person name="Schnepple D.J."/>
            <person name="Shepard B."/>
            <person name="Bren G.D."/>
            <person name="Cummins N.W."/>
            <person name="Natesampillai S."/>
            <person name="Trushin S."/>
            <person name="Algeciras-Schimnich A."/>
            <person name="Meng X.W."/>
            <person name="Sainski A.M."/>
            <person name="Rizza S.A."/>
            <person name="Kaufmann S.H."/>
            <person name="Badley A.D."/>
        </authorList>
    </citation>
    <scope>NUCLEOTIDE SEQUENCE [MRNA] (ISOFORM 2)</scope>
    <scope>ALTERNATIVE SPLICING</scope>
</reference>
<reference key="4">
    <citation type="submission" date="2007-09" db="EMBL/GenBank/DDBJ databases">
        <title>Novel TRAIL splice variant TRAIL-delta.</title>
        <authorList>
            <person name="Woods D.C."/>
            <person name="Haugen M.J."/>
            <person name="Johnson A.L."/>
        </authorList>
    </citation>
    <scope>NUCLEOTIDE SEQUENCE [MRNA] (ISOFORM 2)</scope>
</reference>
<reference key="5">
    <citation type="journal article" date="2004" name="Nat. Genet.">
        <title>Complete sequencing and characterization of 21,243 full-length human cDNAs.</title>
        <authorList>
            <person name="Ota T."/>
            <person name="Suzuki Y."/>
            <person name="Nishikawa T."/>
            <person name="Otsuki T."/>
            <person name="Sugiyama T."/>
            <person name="Irie R."/>
            <person name="Wakamatsu A."/>
            <person name="Hayashi K."/>
            <person name="Sato H."/>
            <person name="Nagai K."/>
            <person name="Kimura K."/>
            <person name="Makita H."/>
            <person name="Sekine M."/>
            <person name="Obayashi M."/>
            <person name="Nishi T."/>
            <person name="Shibahara T."/>
            <person name="Tanaka T."/>
            <person name="Ishii S."/>
            <person name="Yamamoto J."/>
            <person name="Saito K."/>
            <person name="Kawai Y."/>
            <person name="Isono Y."/>
            <person name="Nakamura Y."/>
            <person name="Nagahari K."/>
            <person name="Murakami K."/>
            <person name="Yasuda T."/>
            <person name="Iwayanagi T."/>
            <person name="Wagatsuma M."/>
            <person name="Shiratori A."/>
            <person name="Sudo H."/>
            <person name="Hosoiri T."/>
            <person name="Kaku Y."/>
            <person name="Kodaira H."/>
            <person name="Kondo H."/>
            <person name="Sugawara M."/>
            <person name="Takahashi M."/>
            <person name="Kanda K."/>
            <person name="Yokoi T."/>
            <person name="Furuya T."/>
            <person name="Kikkawa E."/>
            <person name="Omura Y."/>
            <person name="Abe K."/>
            <person name="Kamihara K."/>
            <person name="Katsuta N."/>
            <person name="Sato K."/>
            <person name="Tanikawa M."/>
            <person name="Yamazaki M."/>
            <person name="Ninomiya K."/>
            <person name="Ishibashi T."/>
            <person name="Yamashita H."/>
            <person name="Murakawa K."/>
            <person name="Fujimori K."/>
            <person name="Tanai H."/>
            <person name="Kimata M."/>
            <person name="Watanabe M."/>
            <person name="Hiraoka S."/>
            <person name="Chiba Y."/>
            <person name="Ishida S."/>
            <person name="Ono Y."/>
            <person name="Takiguchi S."/>
            <person name="Watanabe S."/>
            <person name="Yosida M."/>
            <person name="Hotuta T."/>
            <person name="Kusano J."/>
            <person name="Kanehori K."/>
            <person name="Takahashi-Fujii A."/>
            <person name="Hara H."/>
            <person name="Tanase T.-O."/>
            <person name="Nomura Y."/>
            <person name="Togiya S."/>
            <person name="Komai F."/>
            <person name="Hara R."/>
            <person name="Takeuchi K."/>
            <person name="Arita M."/>
            <person name="Imose N."/>
            <person name="Musashino K."/>
            <person name="Yuuki H."/>
            <person name="Oshima A."/>
            <person name="Sasaki N."/>
            <person name="Aotsuka S."/>
            <person name="Yoshikawa Y."/>
            <person name="Matsunawa H."/>
            <person name="Ichihara T."/>
            <person name="Shiohata N."/>
            <person name="Sano S."/>
            <person name="Moriya S."/>
            <person name="Momiyama H."/>
            <person name="Satoh N."/>
            <person name="Takami S."/>
            <person name="Terashima Y."/>
            <person name="Suzuki O."/>
            <person name="Nakagawa S."/>
            <person name="Senoh A."/>
            <person name="Mizoguchi H."/>
            <person name="Goto Y."/>
            <person name="Shimizu F."/>
            <person name="Wakebe H."/>
            <person name="Hishigaki H."/>
            <person name="Watanabe T."/>
            <person name="Sugiyama A."/>
            <person name="Takemoto M."/>
            <person name="Kawakami B."/>
            <person name="Yamazaki M."/>
            <person name="Watanabe K."/>
            <person name="Kumagai A."/>
            <person name="Itakura S."/>
            <person name="Fukuzumi Y."/>
            <person name="Fujimori Y."/>
            <person name="Komiyama M."/>
            <person name="Tashiro H."/>
            <person name="Tanigami A."/>
            <person name="Fujiwara T."/>
            <person name="Ono T."/>
            <person name="Yamada K."/>
            <person name="Fujii Y."/>
            <person name="Ozaki K."/>
            <person name="Hirao M."/>
            <person name="Ohmori Y."/>
            <person name="Kawabata A."/>
            <person name="Hikiji T."/>
            <person name="Kobatake N."/>
            <person name="Inagaki H."/>
            <person name="Ikema Y."/>
            <person name="Okamoto S."/>
            <person name="Okitani R."/>
            <person name="Kawakami T."/>
            <person name="Noguchi S."/>
            <person name="Itoh T."/>
            <person name="Shigeta K."/>
            <person name="Senba T."/>
            <person name="Matsumura K."/>
            <person name="Nakajima Y."/>
            <person name="Mizuno T."/>
            <person name="Morinaga M."/>
            <person name="Sasaki M."/>
            <person name="Togashi T."/>
            <person name="Oyama M."/>
            <person name="Hata H."/>
            <person name="Watanabe M."/>
            <person name="Komatsu T."/>
            <person name="Mizushima-Sugano J."/>
            <person name="Satoh T."/>
            <person name="Shirai Y."/>
            <person name="Takahashi Y."/>
            <person name="Nakagawa K."/>
            <person name="Okumura K."/>
            <person name="Nagase T."/>
            <person name="Nomura N."/>
            <person name="Kikuchi H."/>
            <person name="Masuho Y."/>
            <person name="Yamashita R."/>
            <person name="Nakai K."/>
            <person name="Yada T."/>
            <person name="Nakamura Y."/>
            <person name="Ohara O."/>
            <person name="Isogai T."/>
            <person name="Sugano S."/>
        </authorList>
    </citation>
    <scope>NUCLEOTIDE SEQUENCE [LARGE SCALE MRNA] (ISOFORM 2)</scope>
    <source>
        <tissue>Thalamus</tissue>
    </source>
</reference>
<reference key="6">
    <citation type="journal article" date="2006" name="Nature">
        <title>The DNA sequence, annotation and analysis of human chromosome 3.</title>
        <authorList>
            <person name="Muzny D.M."/>
            <person name="Scherer S.E."/>
            <person name="Kaul R."/>
            <person name="Wang J."/>
            <person name="Yu J."/>
            <person name="Sudbrak R."/>
            <person name="Buhay C.J."/>
            <person name="Chen R."/>
            <person name="Cree A."/>
            <person name="Ding Y."/>
            <person name="Dugan-Rocha S."/>
            <person name="Gill R."/>
            <person name="Gunaratne P."/>
            <person name="Harris R.A."/>
            <person name="Hawes A.C."/>
            <person name="Hernandez J."/>
            <person name="Hodgson A.V."/>
            <person name="Hume J."/>
            <person name="Jackson A."/>
            <person name="Khan Z.M."/>
            <person name="Kovar-Smith C."/>
            <person name="Lewis L.R."/>
            <person name="Lozado R.J."/>
            <person name="Metzker M.L."/>
            <person name="Milosavljevic A."/>
            <person name="Miner G.R."/>
            <person name="Morgan M.B."/>
            <person name="Nazareth L.V."/>
            <person name="Scott G."/>
            <person name="Sodergren E."/>
            <person name="Song X.-Z."/>
            <person name="Steffen D."/>
            <person name="Wei S."/>
            <person name="Wheeler D.A."/>
            <person name="Wright M.W."/>
            <person name="Worley K.C."/>
            <person name="Yuan Y."/>
            <person name="Zhang Z."/>
            <person name="Adams C.Q."/>
            <person name="Ansari-Lari M.A."/>
            <person name="Ayele M."/>
            <person name="Brown M.J."/>
            <person name="Chen G."/>
            <person name="Chen Z."/>
            <person name="Clendenning J."/>
            <person name="Clerc-Blankenburg K.P."/>
            <person name="Chen R."/>
            <person name="Chen Z."/>
            <person name="Davis C."/>
            <person name="Delgado O."/>
            <person name="Dinh H.H."/>
            <person name="Dong W."/>
            <person name="Draper H."/>
            <person name="Ernst S."/>
            <person name="Fu G."/>
            <person name="Gonzalez-Garay M.L."/>
            <person name="Garcia D.K."/>
            <person name="Gillett W."/>
            <person name="Gu J."/>
            <person name="Hao B."/>
            <person name="Haugen E."/>
            <person name="Havlak P."/>
            <person name="He X."/>
            <person name="Hennig S."/>
            <person name="Hu S."/>
            <person name="Huang W."/>
            <person name="Jackson L.R."/>
            <person name="Jacob L.S."/>
            <person name="Kelly S.H."/>
            <person name="Kube M."/>
            <person name="Levy R."/>
            <person name="Li Z."/>
            <person name="Liu B."/>
            <person name="Liu J."/>
            <person name="Liu W."/>
            <person name="Lu J."/>
            <person name="Maheshwari M."/>
            <person name="Nguyen B.-V."/>
            <person name="Okwuonu G.O."/>
            <person name="Palmeiri A."/>
            <person name="Pasternak S."/>
            <person name="Perez L.M."/>
            <person name="Phelps K.A."/>
            <person name="Plopper F.J."/>
            <person name="Qiang B."/>
            <person name="Raymond C."/>
            <person name="Rodriguez R."/>
            <person name="Saenphimmachak C."/>
            <person name="Santibanez J."/>
            <person name="Shen H."/>
            <person name="Shen Y."/>
            <person name="Subramanian S."/>
            <person name="Tabor P.E."/>
            <person name="Verduzco D."/>
            <person name="Waldron L."/>
            <person name="Wang J."/>
            <person name="Wang J."/>
            <person name="Wang Q."/>
            <person name="Williams G.A."/>
            <person name="Wong G.K.-S."/>
            <person name="Yao Z."/>
            <person name="Zhang J."/>
            <person name="Zhang X."/>
            <person name="Zhao G."/>
            <person name="Zhou J."/>
            <person name="Zhou Y."/>
            <person name="Nelson D."/>
            <person name="Lehrach H."/>
            <person name="Reinhardt R."/>
            <person name="Naylor S.L."/>
            <person name="Yang H."/>
            <person name="Olson M."/>
            <person name="Weinstock G."/>
            <person name="Gibbs R.A."/>
        </authorList>
    </citation>
    <scope>NUCLEOTIDE SEQUENCE [LARGE SCALE GENOMIC DNA]</scope>
</reference>
<reference key="7">
    <citation type="journal article" date="2004" name="Genome Res.">
        <title>The status, quality, and expansion of the NIH full-length cDNA project: the Mammalian Gene Collection (MGC).</title>
        <authorList>
            <consortium name="The MGC Project Team"/>
        </authorList>
    </citation>
    <scope>NUCLEOTIDE SEQUENCE [LARGE SCALE MRNA] (ISOFORM 1)</scope>
    <source>
        <tissue>Lymph</tissue>
    </source>
</reference>
<reference key="8">
    <citation type="journal article" date="2003" name="Cytokine">
        <title>Regulation of soluble and surface-bound TRAIL in human T cells, B cells, and monocytes.</title>
        <authorList>
            <person name="Ehrlich S."/>
            <person name="Infante-Duarte C."/>
            <person name="Seeger B."/>
            <person name="Zipp F."/>
        </authorList>
    </citation>
    <scope>SUBCELLULAR LOCATION</scope>
</reference>
<reference key="9">
    <citation type="journal article" date="2014" name="Cell">
        <title>A secreted tyrosine kinase acts in the extracellular environment.</title>
        <authorList>
            <person name="Bordoli M.R."/>
            <person name="Yum J."/>
            <person name="Breitkopf S.B."/>
            <person name="Thon J.N."/>
            <person name="Italiano J.E. Jr."/>
            <person name="Xiao J."/>
            <person name="Worby C."/>
            <person name="Wong S.K."/>
            <person name="Lin G."/>
            <person name="Edenius M."/>
            <person name="Keller T.L."/>
            <person name="Asara J.M."/>
            <person name="Dixon J.E."/>
            <person name="Yeo C.Y."/>
            <person name="Whitman M."/>
        </authorList>
    </citation>
    <scope>PHOSPHORYLATION</scope>
</reference>
<reference key="10">
    <citation type="journal article" date="1999" name="Mol. Cell">
        <title>Triggering cell death: the crystal structure of Apo2L/TRAIL in a complex with death receptor 5.</title>
        <authorList>
            <person name="Hymowitz S.G."/>
            <person name="Christinger H.W."/>
            <person name="Fuh G."/>
            <person name="Ultsch M."/>
            <person name="O'Connell M."/>
            <person name="Kelley R.F."/>
            <person name="Ashkenazi A."/>
            <person name="de Vos A.M."/>
        </authorList>
    </citation>
    <scope>X-RAY CRYSTALLOGRAPHY (2.4 ANGSTROMS) OF 114-281 IN COMPLEX WITH TNFRSF10B</scope>
    <scope>ZINC-BINDING SITE</scope>
</reference>
<reference key="11">
    <citation type="journal article" date="1999" name="Nat. Struct. Biol.">
        <title>Structure of the TRAIL-DR5 complex reveals mechanisms conferring specificity in apoptotic initiation.</title>
        <authorList>
            <person name="Mongkolsapaya J."/>
            <person name="Grimes J.M."/>
            <person name="Chen N."/>
            <person name="Xu X.-N."/>
            <person name="Stuart D.I."/>
            <person name="Jones E.Y."/>
            <person name="Screaton G.R."/>
        </authorList>
    </citation>
    <scope>X-RAY CRYSTALLOGRAPHY (2.2 ANGSTROMS) OF 119-281 IN COMPLEX WITH TNFRSF10B</scope>
</reference>
<reference key="12">
    <citation type="journal article" date="1999" name="Immunity">
        <title>2.8 A resolution crystal structure of human TRAIL, a cytokine with selective antitumor activity.</title>
        <authorList>
            <person name="Cha S.-S."/>
            <person name="Kim M.S."/>
            <person name="Choi Y.H."/>
            <person name="Sung B.J."/>
            <person name="Shin N.K."/>
            <person name="Shin H.C."/>
            <person name="Sung Y.C."/>
            <person name="Oh B.-H."/>
        </authorList>
    </citation>
    <scope>X-RAY CRYSTALLOGRAPHY (2.8 ANGSTROMS) OF 114-281</scope>
</reference>
<reference evidence="12" key="13">
    <citation type="journal article" date="2015" name="Acta Crystallogr. F">
        <title>The structure of the death receptor 4-TNF-related apoptosis-inducing ligand (DR4-TRAIL) complex.</title>
        <authorList>
            <person name="Ramamurthy V."/>
            <person name="Yamniuk A.P."/>
            <person name="Lawrence E.J."/>
            <person name="Yong W."/>
            <person name="Schneeweis L.A."/>
            <person name="Cheng L."/>
            <person name="Murdock M."/>
            <person name="Corbett M.J."/>
            <person name="Doyle M.L."/>
            <person name="Sheriff S."/>
        </authorList>
    </citation>
    <scope>X-RAY CRYSTALLOGRAPHY (3.00 ANGSTROMS) OF 114-281 IN COMPLEX WITH TNFRSF10A</scope>
    <scope>SUBUNIT</scope>
    <scope>FUNCTION</scope>
    <scope>ZINC-BINDING SITE</scope>
</reference>
<comment type="function">
    <text evidence="4 7">Cytokine that binds to TNFRSF10A/TRAILR1, TNFRSF10B/TRAILR2, TNFRSF10C/TRAILR3, TNFRSF10D/TRAILR4 and possibly also to TNFRSF11B/OPG (PubMed:10549288, PubMed:26457518). Induces apoptosis. Its activity may be modulated by binding to the decoy receptors TNFRSF10C/TRAILR3, TNFRSF10D/TRAILR4 and TNFRSF11B/OPG that cannot induce apoptosis.</text>
</comment>
<comment type="subunit">
    <text evidence="4 7">Homotrimer (PubMed:26457518). One TNFSF10 homotrimer interacts with three TNFSF10A mononers (PubMed:26457518). One TNFSF10 homotrimer interacts with three TNFSF10B mononers (PubMed:10549288).</text>
</comment>
<comment type="interaction">
    <interactant intactId="EBI-495373">
        <id>P50591</id>
    </interactant>
    <interactant intactId="EBI-456129">
        <id>Q13618</id>
        <label>CUL3</label>
    </interactant>
    <organismsDiffer>false</organismsDiffer>
    <experiments>2</experiments>
</comment>
<comment type="interaction">
    <interactant intactId="EBI-495373">
        <id>P50591</id>
    </interactant>
    <interactant intactId="EBI-518861">
        <id>O00220</id>
        <label>TNFRSF10A</label>
    </interactant>
    <organismsDiffer>false</organismsDiffer>
    <experiments>4</experiments>
</comment>
<comment type="interaction">
    <interactant intactId="EBI-495373">
        <id>P50591</id>
    </interactant>
    <interactant intactId="EBI-518882">
        <id>O14763</id>
        <label>TNFRSF10B</label>
    </interactant>
    <organismsDiffer>false</organismsDiffer>
    <experiments>21</experiments>
</comment>
<comment type="subcellular location">
    <subcellularLocation>
        <location evidence="5">Cell membrane</location>
        <topology evidence="11">Single-pass type II membrane protein</topology>
    </subcellularLocation>
    <subcellularLocation>
        <location evidence="5">Secreted</location>
    </subcellularLocation>
    <text evidence="5">Exists both as membrane-bound and soluble form.</text>
</comment>
<comment type="alternative products">
    <event type="alternative splicing"/>
    <isoform>
        <id>P50591-1</id>
        <name>1</name>
        <sequence type="displayed"/>
    </isoform>
    <isoform>
        <id>P50591-2</id>
        <name>2</name>
        <name>TRAIL-short</name>
        <name>TRAIL-s</name>
        <sequence type="described" ref="VSP_043507 VSP_043508"/>
    </isoform>
</comment>
<comment type="tissue specificity">
    <text>Widespread; most predominant in spleen, lung and prostate.</text>
</comment>
<comment type="PTM">
    <text evidence="6">Tyrosine phosphorylated by PKDCC/VLK.</text>
</comment>
<comment type="miscellaneous">
    <molecule>Isoform 2</molecule>
    <text evidence="11">Induced upon HIV infection, antagonizes signaling via TRAIL receptor R2 (TNFRSF10B).</text>
</comment>
<comment type="similarity">
    <text evidence="11">Belongs to the tumor necrosis factor family.</text>
</comment>
<comment type="online information" name="Atlas of Genetics and Cytogenetics in Oncology and Haematology">
    <link uri="https://atlasgeneticsoncology.org/gene/42632/TNFSF10"/>
</comment>
<sequence>MAMMEVQGGPSLGQTCVLIVIFTVLLQSLCVAVTYVYFTNELKQMQDKYSKSGIACFLKEDDSYWDPNDEESMNSPCWQVKWQLRQLVRKMILRTSEETISTVQEKQQNISPLVRERGPQRVAAHITGTRGRSNTLSSPNSKNEKALGRKINSWESSRSGHSFLSNLHLRNGELVIHEKGFYYIYSQTYFRFQEEIKENTKNDKQMVQYIYKYTSYPDPILLMKSARNSCWSKDAEYGLYSIYQGGIFELKENDRIFVSVTNEHLIDMDHEASFFGAFLVG</sequence>
<organism>
    <name type="scientific">Homo sapiens</name>
    <name type="common">Human</name>
    <dbReference type="NCBI Taxonomy" id="9606"/>
    <lineage>
        <taxon>Eukaryota</taxon>
        <taxon>Metazoa</taxon>
        <taxon>Chordata</taxon>
        <taxon>Craniata</taxon>
        <taxon>Vertebrata</taxon>
        <taxon>Euteleostomi</taxon>
        <taxon>Mammalia</taxon>
        <taxon>Eutheria</taxon>
        <taxon>Euarchontoglires</taxon>
        <taxon>Primates</taxon>
        <taxon>Haplorrhini</taxon>
        <taxon>Catarrhini</taxon>
        <taxon>Hominidae</taxon>
        <taxon>Homo</taxon>
    </lineage>
</organism>
<feature type="chain" id="PRO_0000185503" description="Tumor necrosis factor ligand superfamily member 10">
    <location>
        <begin position="1"/>
        <end position="281"/>
    </location>
</feature>
<feature type="topological domain" description="Cytoplasmic" evidence="1">
    <location>
        <begin position="1"/>
        <end position="17"/>
    </location>
</feature>
<feature type="transmembrane region" description="Helical; Signal-anchor for type II membrane protein" evidence="1">
    <location>
        <begin position="18"/>
        <end position="38"/>
    </location>
</feature>
<feature type="topological domain" description="Extracellular" evidence="1">
    <location>
        <begin position="39"/>
        <end position="281"/>
    </location>
</feature>
<feature type="domain" description="THD" evidence="2">
    <location>
        <begin position="122"/>
        <end position="280"/>
    </location>
</feature>
<feature type="region of interest" description="Disordered" evidence="3">
    <location>
        <begin position="124"/>
        <end position="144"/>
    </location>
</feature>
<feature type="compositionally biased region" description="Polar residues" evidence="3">
    <location>
        <begin position="130"/>
        <end position="141"/>
    </location>
</feature>
<feature type="binding site" evidence="4 7 12">
    <location>
        <position position="230"/>
    </location>
    <ligand>
        <name>Zn(2+)</name>
        <dbReference type="ChEBI" id="CHEBI:29105"/>
        <note>ligand shared between all trimeric partners</note>
    </ligand>
</feature>
<feature type="splice variant" id="VSP_043507" description="In isoform 2." evidence="8 9 10">
    <original>MILRTSEETIS</original>
    <variation>TPRMKRLWAAK</variation>
    <location>
        <begin position="91"/>
        <end position="101"/>
    </location>
</feature>
<feature type="splice variant" id="VSP_043508" description="In isoform 2." evidence="8 9 10">
    <location>
        <begin position="102"/>
        <end position="281"/>
    </location>
</feature>
<feature type="sequence variant" id="VAR_052584" description="In dbSNP:rs6763816.">
    <original>V</original>
    <variation>I</variation>
    <location>
        <position position="33"/>
    </location>
</feature>
<feature type="sequence variant" id="VAR_052585" description="In dbSNP:rs16845759.">
    <original>D</original>
    <variation>E</variation>
    <location>
        <position position="47"/>
    </location>
</feature>
<feature type="strand" evidence="16">
    <location>
        <begin position="123"/>
        <end position="127"/>
    </location>
</feature>
<feature type="turn" evidence="15">
    <location>
        <begin position="137"/>
        <end position="139"/>
    </location>
</feature>
<feature type="strand" evidence="14">
    <location>
        <begin position="144"/>
        <end position="146"/>
    </location>
</feature>
<feature type="strand" evidence="16">
    <location>
        <begin position="148"/>
        <end position="150"/>
    </location>
</feature>
<feature type="turn" evidence="13">
    <location>
        <begin position="158"/>
        <end position="161"/>
    </location>
</feature>
<feature type="strand" evidence="16">
    <location>
        <begin position="163"/>
        <end position="170"/>
    </location>
</feature>
<feature type="strand" evidence="16">
    <location>
        <begin position="173"/>
        <end position="178"/>
    </location>
</feature>
<feature type="strand" evidence="16">
    <location>
        <begin position="180"/>
        <end position="193"/>
    </location>
</feature>
<feature type="strand" evidence="17">
    <location>
        <begin position="198"/>
        <end position="200"/>
    </location>
</feature>
<feature type="strand" evidence="16">
    <location>
        <begin position="205"/>
        <end position="213"/>
    </location>
</feature>
<feature type="strand" evidence="16">
    <location>
        <begin position="215"/>
        <end position="218"/>
    </location>
</feature>
<feature type="strand" evidence="16">
    <location>
        <begin position="220"/>
        <end position="228"/>
    </location>
</feature>
<feature type="strand" evidence="16">
    <location>
        <begin position="237"/>
        <end position="250"/>
    </location>
</feature>
<feature type="strand" evidence="16">
    <location>
        <begin position="255"/>
        <end position="262"/>
    </location>
</feature>
<feature type="helix" evidence="16">
    <location>
        <begin position="263"/>
        <end position="265"/>
    </location>
</feature>
<feature type="turn" evidence="16">
    <location>
        <begin position="270"/>
        <end position="272"/>
    </location>
</feature>
<feature type="strand" evidence="16">
    <location>
        <begin position="273"/>
        <end position="279"/>
    </location>
</feature>
<accession>P50591</accession>
<accession>A1Y9B3</accession>
<evidence type="ECO:0000255" key="1"/>
<evidence type="ECO:0000255" key="2">
    <source>
        <dbReference type="PROSITE-ProRule" id="PRU01387"/>
    </source>
</evidence>
<evidence type="ECO:0000256" key="3">
    <source>
        <dbReference type="SAM" id="MobiDB-lite"/>
    </source>
</evidence>
<evidence type="ECO:0000269" key="4">
    <source>
    </source>
</evidence>
<evidence type="ECO:0000269" key="5">
    <source>
    </source>
</evidence>
<evidence type="ECO:0000269" key="6">
    <source>
    </source>
</evidence>
<evidence type="ECO:0000269" key="7">
    <source>
    </source>
</evidence>
<evidence type="ECO:0000303" key="8">
    <source>
    </source>
</evidence>
<evidence type="ECO:0000303" key="9">
    <source>
    </source>
</evidence>
<evidence type="ECO:0000303" key="10">
    <source ref="4"/>
</evidence>
<evidence type="ECO:0000305" key="11"/>
<evidence type="ECO:0007744" key="12">
    <source>
        <dbReference type="PDB" id="5CIR"/>
    </source>
</evidence>
<evidence type="ECO:0007829" key="13">
    <source>
        <dbReference type="PDB" id="1D0G"/>
    </source>
</evidence>
<evidence type="ECO:0007829" key="14">
    <source>
        <dbReference type="PDB" id="1D2Q"/>
    </source>
</evidence>
<evidence type="ECO:0007829" key="15">
    <source>
        <dbReference type="PDB" id="1D4V"/>
    </source>
</evidence>
<evidence type="ECO:0007829" key="16">
    <source>
        <dbReference type="PDB" id="1DG6"/>
    </source>
</evidence>
<evidence type="ECO:0007829" key="17">
    <source>
        <dbReference type="PDB" id="5CIR"/>
    </source>
</evidence>
<keyword id="KW-0002">3D-structure</keyword>
<keyword id="KW-0025">Alternative splicing</keyword>
<keyword id="KW-0053">Apoptosis</keyword>
<keyword id="KW-1003">Cell membrane</keyword>
<keyword id="KW-0202">Cytokine</keyword>
<keyword id="KW-0472">Membrane</keyword>
<keyword id="KW-0479">Metal-binding</keyword>
<keyword id="KW-0597">Phosphoprotein</keyword>
<keyword id="KW-1267">Proteomics identification</keyword>
<keyword id="KW-1185">Reference proteome</keyword>
<keyword id="KW-0964">Secreted</keyword>
<keyword id="KW-0735">Signal-anchor</keyword>
<keyword id="KW-0812">Transmembrane</keyword>
<keyword id="KW-1133">Transmembrane helix</keyword>
<keyword id="KW-0862">Zinc</keyword>
<protein>
    <recommendedName>
        <fullName>Tumor necrosis factor ligand superfamily member 10</fullName>
    </recommendedName>
    <alternativeName>
        <fullName>Apo-2 ligand</fullName>
        <shortName>Apo-2L</shortName>
    </alternativeName>
    <alternativeName>
        <fullName>TNF-related apoptosis-inducing ligand</fullName>
        <shortName>Protein TRAIL</shortName>
    </alternativeName>
    <cdAntigenName>CD253</cdAntigenName>
</protein>